<proteinExistence type="inferred from homology"/>
<accession>Q5LUQ0</accession>
<keyword id="KW-0963">Cytoplasm</keyword>
<keyword id="KW-0378">Hydrolase</keyword>
<keyword id="KW-0645">Protease</keyword>
<keyword id="KW-1185">Reference proteome</keyword>
<keyword id="KW-0720">Serine protease</keyword>
<evidence type="ECO:0000255" key="1">
    <source>
        <dbReference type="HAMAP-Rule" id="MF_00444"/>
    </source>
</evidence>
<evidence type="ECO:0000305" key="2"/>
<dbReference type="EC" id="3.4.21.92" evidence="1"/>
<dbReference type="EMBL" id="CP000031">
    <property type="protein sequence ID" value="AAV94307.2"/>
    <property type="status" value="ALT_INIT"/>
    <property type="molecule type" value="Genomic_DNA"/>
</dbReference>
<dbReference type="RefSeq" id="WP_011046751.1">
    <property type="nucleotide sequence ID" value="NC_003911.12"/>
</dbReference>
<dbReference type="SMR" id="Q5LUQ0"/>
<dbReference type="STRING" id="246200.SPO1003"/>
<dbReference type="MEROPS" id="S14.001"/>
<dbReference type="PaxDb" id="246200-SPO1003"/>
<dbReference type="KEGG" id="sil:SPO1003"/>
<dbReference type="eggNOG" id="COG0740">
    <property type="taxonomic scope" value="Bacteria"/>
</dbReference>
<dbReference type="HOGENOM" id="CLU_058707_3_2_5"/>
<dbReference type="OrthoDB" id="9802800at2"/>
<dbReference type="Proteomes" id="UP000001023">
    <property type="component" value="Chromosome"/>
</dbReference>
<dbReference type="GO" id="GO:0005737">
    <property type="term" value="C:cytoplasm"/>
    <property type="evidence" value="ECO:0007669"/>
    <property type="project" value="UniProtKB-SubCell"/>
</dbReference>
<dbReference type="GO" id="GO:0009368">
    <property type="term" value="C:endopeptidase Clp complex"/>
    <property type="evidence" value="ECO:0007669"/>
    <property type="project" value="TreeGrafter"/>
</dbReference>
<dbReference type="GO" id="GO:0004176">
    <property type="term" value="F:ATP-dependent peptidase activity"/>
    <property type="evidence" value="ECO:0007669"/>
    <property type="project" value="InterPro"/>
</dbReference>
<dbReference type="GO" id="GO:0051117">
    <property type="term" value="F:ATPase binding"/>
    <property type="evidence" value="ECO:0007669"/>
    <property type="project" value="TreeGrafter"/>
</dbReference>
<dbReference type="GO" id="GO:0004252">
    <property type="term" value="F:serine-type endopeptidase activity"/>
    <property type="evidence" value="ECO:0007669"/>
    <property type="project" value="UniProtKB-UniRule"/>
</dbReference>
<dbReference type="GO" id="GO:0006515">
    <property type="term" value="P:protein quality control for misfolded or incompletely synthesized proteins"/>
    <property type="evidence" value="ECO:0007669"/>
    <property type="project" value="TreeGrafter"/>
</dbReference>
<dbReference type="CDD" id="cd07017">
    <property type="entry name" value="S14_ClpP_2"/>
    <property type="match status" value="1"/>
</dbReference>
<dbReference type="FunFam" id="3.90.226.10:FF:000001">
    <property type="entry name" value="ATP-dependent Clp protease proteolytic subunit"/>
    <property type="match status" value="1"/>
</dbReference>
<dbReference type="Gene3D" id="3.90.226.10">
    <property type="entry name" value="2-enoyl-CoA Hydratase, Chain A, domain 1"/>
    <property type="match status" value="1"/>
</dbReference>
<dbReference type="HAMAP" id="MF_00444">
    <property type="entry name" value="ClpP"/>
    <property type="match status" value="1"/>
</dbReference>
<dbReference type="InterPro" id="IPR001907">
    <property type="entry name" value="ClpP"/>
</dbReference>
<dbReference type="InterPro" id="IPR029045">
    <property type="entry name" value="ClpP/crotonase-like_dom_sf"/>
</dbReference>
<dbReference type="InterPro" id="IPR023562">
    <property type="entry name" value="ClpP/TepA"/>
</dbReference>
<dbReference type="InterPro" id="IPR033135">
    <property type="entry name" value="ClpP_His_AS"/>
</dbReference>
<dbReference type="InterPro" id="IPR018215">
    <property type="entry name" value="ClpP_Ser_AS"/>
</dbReference>
<dbReference type="NCBIfam" id="NF001368">
    <property type="entry name" value="PRK00277.1"/>
    <property type="match status" value="1"/>
</dbReference>
<dbReference type="NCBIfam" id="NF009205">
    <property type="entry name" value="PRK12553.1"/>
    <property type="match status" value="1"/>
</dbReference>
<dbReference type="PANTHER" id="PTHR10381">
    <property type="entry name" value="ATP-DEPENDENT CLP PROTEASE PROTEOLYTIC SUBUNIT"/>
    <property type="match status" value="1"/>
</dbReference>
<dbReference type="PANTHER" id="PTHR10381:SF70">
    <property type="entry name" value="ATP-DEPENDENT CLP PROTEASE PROTEOLYTIC SUBUNIT"/>
    <property type="match status" value="1"/>
</dbReference>
<dbReference type="Pfam" id="PF00574">
    <property type="entry name" value="CLP_protease"/>
    <property type="match status" value="1"/>
</dbReference>
<dbReference type="PRINTS" id="PR00127">
    <property type="entry name" value="CLPPROTEASEP"/>
</dbReference>
<dbReference type="SUPFAM" id="SSF52096">
    <property type="entry name" value="ClpP/crotonase"/>
    <property type="match status" value="1"/>
</dbReference>
<dbReference type="PROSITE" id="PS00382">
    <property type="entry name" value="CLP_PROTEASE_HIS"/>
    <property type="match status" value="1"/>
</dbReference>
<dbReference type="PROSITE" id="PS00381">
    <property type="entry name" value="CLP_PROTEASE_SER"/>
    <property type="match status" value="1"/>
</dbReference>
<organism>
    <name type="scientific">Ruegeria pomeroyi (strain ATCC 700808 / DSM 15171 / DSS-3)</name>
    <name type="common">Silicibacter pomeroyi</name>
    <dbReference type="NCBI Taxonomy" id="246200"/>
    <lineage>
        <taxon>Bacteria</taxon>
        <taxon>Pseudomonadati</taxon>
        <taxon>Pseudomonadota</taxon>
        <taxon>Alphaproteobacteria</taxon>
        <taxon>Rhodobacterales</taxon>
        <taxon>Roseobacteraceae</taxon>
        <taxon>Ruegeria</taxon>
    </lineage>
</organism>
<feature type="chain" id="PRO_0000179648" description="ATP-dependent Clp protease proteolytic subunit">
    <location>
        <begin position="1"/>
        <end position="209"/>
    </location>
</feature>
<feature type="active site" description="Nucleophile" evidence="1">
    <location>
        <position position="107"/>
    </location>
</feature>
<feature type="active site" evidence="1">
    <location>
        <position position="132"/>
    </location>
</feature>
<gene>
    <name evidence="1" type="primary">clpP</name>
    <name type="ordered locus">SPO1003</name>
</gene>
<sequence>MFDPVDTYMNTLVPMVVEQTSRGERAYDIFSRLLKERIIFINGPIHDGMSHLIVAQLLHLEAENPNKEISIYINSPGGVVTSGLSIYDTMQYIKPKCSTLVIGQAASMGSVLLAGGEKGMRFSLPNSRIMVHQPSGGYQGQASDIMIHAAETQKLKDRLYDIYVKHTGQTKKAVEKALDRDNFMSPEEAKEWGHIDEIVESRSKGDDAE</sequence>
<comment type="function">
    <text evidence="1">Cleaves peptides in various proteins in a process that requires ATP hydrolysis. Has a chymotrypsin-like activity. Plays a major role in the degradation of misfolded proteins.</text>
</comment>
<comment type="catalytic activity">
    <reaction evidence="1">
        <text>Hydrolysis of proteins to small peptides in the presence of ATP and magnesium. alpha-casein is the usual test substrate. In the absence of ATP, only oligopeptides shorter than five residues are hydrolyzed (such as succinyl-Leu-Tyr-|-NHMec, and Leu-Tyr-Leu-|-Tyr-Trp, in which cleavage of the -Tyr-|-Leu- and -Tyr-|-Trp bonds also occurs).</text>
        <dbReference type="EC" id="3.4.21.92"/>
    </reaction>
</comment>
<comment type="subunit">
    <text evidence="1">Fourteen ClpP subunits assemble into 2 heptameric rings which stack back to back to give a disk-like structure with a central cavity, resembling the structure of eukaryotic proteasomes.</text>
</comment>
<comment type="subcellular location">
    <subcellularLocation>
        <location evidence="1">Cytoplasm</location>
    </subcellularLocation>
</comment>
<comment type="similarity">
    <text evidence="1">Belongs to the peptidase S14 family.</text>
</comment>
<comment type="sequence caution" evidence="2">
    <conflict type="erroneous initiation">
        <sequence resource="EMBL-CDS" id="AAV94307"/>
    </conflict>
    <text>Truncated N-terminus.</text>
</comment>
<protein>
    <recommendedName>
        <fullName evidence="1">ATP-dependent Clp protease proteolytic subunit</fullName>
        <ecNumber evidence="1">3.4.21.92</ecNumber>
    </recommendedName>
    <alternativeName>
        <fullName evidence="1">Endopeptidase Clp</fullName>
    </alternativeName>
</protein>
<reference key="1">
    <citation type="journal article" date="2004" name="Nature">
        <title>Genome sequence of Silicibacter pomeroyi reveals adaptations to the marine environment.</title>
        <authorList>
            <person name="Moran M.A."/>
            <person name="Buchan A."/>
            <person name="Gonzalez J.M."/>
            <person name="Heidelberg J.F."/>
            <person name="Whitman W.B."/>
            <person name="Kiene R.P."/>
            <person name="Henriksen J.R."/>
            <person name="King G.M."/>
            <person name="Belas R."/>
            <person name="Fuqua C."/>
            <person name="Brinkac L.M."/>
            <person name="Lewis M."/>
            <person name="Johri S."/>
            <person name="Weaver B."/>
            <person name="Pai G."/>
            <person name="Eisen J.A."/>
            <person name="Rahe E."/>
            <person name="Sheldon W.M."/>
            <person name="Ye W."/>
            <person name="Miller T.R."/>
            <person name="Carlton J."/>
            <person name="Rasko D.A."/>
            <person name="Paulsen I.T."/>
            <person name="Ren Q."/>
            <person name="Daugherty S.C."/>
            <person name="DeBoy R.T."/>
            <person name="Dodson R.J."/>
            <person name="Durkin A.S."/>
            <person name="Madupu R."/>
            <person name="Nelson W.C."/>
            <person name="Sullivan S.A."/>
            <person name="Rosovitz M.J."/>
            <person name="Haft D.H."/>
            <person name="Selengut J."/>
            <person name="Ward N."/>
        </authorList>
    </citation>
    <scope>NUCLEOTIDE SEQUENCE [LARGE SCALE GENOMIC DNA]</scope>
    <source>
        <strain>ATCC 700808 / DSM 15171 / DSS-3</strain>
    </source>
</reference>
<reference key="2">
    <citation type="journal article" date="2014" name="Stand. Genomic Sci.">
        <title>An updated genome annotation for the model marine bacterium Ruegeria pomeroyi DSS-3.</title>
        <authorList>
            <person name="Rivers A.R."/>
            <person name="Smith C.B."/>
            <person name="Moran M.A."/>
        </authorList>
    </citation>
    <scope>GENOME REANNOTATION</scope>
    <source>
        <strain>ATCC 700808 / DSM 15171 / DSS-3</strain>
    </source>
</reference>
<name>CLPP_RUEPO</name>